<reference key="1">
    <citation type="journal article" date="1999" name="Endocrinology">
        <title>Complementary deoxyribonucleic acid cloning and enzymatic characterization of a novel 17beta/3alpha-hydroxysteroid/retinoid short chain dehydrogenase/reductase.</title>
        <authorList>
            <person name="Su J."/>
            <person name="Lin M."/>
            <person name="Napoli J.L."/>
        </authorList>
    </citation>
    <scope>NUCLEOTIDE SEQUENCE [MRNA]</scope>
    <scope>FUNCTION</scope>
    <scope>CATALYTIC ACTIVITY</scope>
    <scope>SUBCELLULAR LOCATION</scope>
    <scope>TISSUE SPECIFICITY</scope>
    <scope>BIOPHYSICOCHEMICAL PROPERTIES</scope>
    <scope>ACTIVITY REGULATION</scope>
    <source>
        <tissue>Liver</tissue>
    </source>
</reference>
<reference key="2">
    <citation type="journal article" date="2005" name="Science">
        <title>The transcriptional landscape of the mammalian genome.</title>
        <authorList>
            <person name="Carninci P."/>
            <person name="Kasukawa T."/>
            <person name="Katayama S."/>
            <person name="Gough J."/>
            <person name="Frith M.C."/>
            <person name="Maeda N."/>
            <person name="Oyama R."/>
            <person name="Ravasi T."/>
            <person name="Lenhard B."/>
            <person name="Wells C."/>
            <person name="Kodzius R."/>
            <person name="Shimokawa K."/>
            <person name="Bajic V.B."/>
            <person name="Brenner S.E."/>
            <person name="Batalov S."/>
            <person name="Forrest A.R."/>
            <person name="Zavolan M."/>
            <person name="Davis M.J."/>
            <person name="Wilming L.G."/>
            <person name="Aidinis V."/>
            <person name="Allen J.E."/>
            <person name="Ambesi-Impiombato A."/>
            <person name="Apweiler R."/>
            <person name="Aturaliya R.N."/>
            <person name="Bailey T.L."/>
            <person name="Bansal M."/>
            <person name="Baxter L."/>
            <person name="Beisel K.W."/>
            <person name="Bersano T."/>
            <person name="Bono H."/>
            <person name="Chalk A.M."/>
            <person name="Chiu K.P."/>
            <person name="Choudhary V."/>
            <person name="Christoffels A."/>
            <person name="Clutterbuck D.R."/>
            <person name="Crowe M.L."/>
            <person name="Dalla E."/>
            <person name="Dalrymple B.P."/>
            <person name="de Bono B."/>
            <person name="Della Gatta G."/>
            <person name="di Bernardo D."/>
            <person name="Down T."/>
            <person name="Engstrom P."/>
            <person name="Fagiolini M."/>
            <person name="Faulkner G."/>
            <person name="Fletcher C.F."/>
            <person name="Fukushima T."/>
            <person name="Furuno M."/>
            <person name="Futaki S."/>
            <person name="Gariboldi M."/>
            <person name="Georgii-Hemming P."/>
            <person name="Gingeras T.R."/>
            <person name="Gojobori T."/>
            <person name="Green R.E."/>
            <person name="Gustincich S."/>
            <person name="Harbers M."/>
            <person name="Hayashi Y."/>
            <person name="Hensch T.K."/>
            <person name="Hirokawa N."/>
            <person name="Hill D."/>
            <person name="Huminiecki L."/>
            <person name="Iacono M."/>
            <person name="Ikeo K."/>
            <person name="Iwama A."/>
            <person name="Ishikawa T."/>
            <person name="Jakt M."/>
            <person name="Kanapin A."/>
            <person name="Katoh M."/>
            <person name="Kawasawa Y."/>
            <person name="Kelso J."/>
            <person name="Kitamura H."/>
            <person name="Kitano H."/>
            <person name="Kollias G."/>
            <person name="Krishnan S.P."/>
            <person name="Kruger A."/>
            <person name="Kummerfeld S.K."/>
            <person name="Kurochkin I.V."/>
            <person name="Lareau L.F."/>
            <person name="Lazarevic D."/>
            <person name="Lipovich L."/>
            <person name="Liu J."/>
            <person name="Liuni S."/>
            <person name="McWilliam S."/>
            <person name="Madan Babu M."/>
            <person name="Madera M."/>
            <person name="Marchionni L."/>
            <person name="Matsuda H."/>
            <person name="Matsuzawa S."/>
            <person name="Miki H."/>
            <person name="Mignone F."/>
            <person name="Miyake S."/>
            <person name="Morris K."/>
            <person name="Mottagui-Tabar S."/>
            <person name="Mulder N."/>
            <person name="Nakano N."/>
            <person name="Nakauchi H."/>
            <person name="Ng P."/>
            <person name="Nilsson R."/>
            <person name="Nishiguchi S."/>
            <person name="Nishikawa S."/>
            <person name="Nori F."/>
            <person name="Ohara O."/>
            <person name="Okazaki Y."/>
            <person name="Orlando V."/>
            <person name="Pang K.C."/>
            <person name="Pavan W.J."/>
            <person name="Pavesi G."/>
            <person name="Pesole G."/>
            <person name="Petrovsky N."/>
            <person name="Piazza S."/>
            <person name="Reed J."/>
            <person name="Reid J.F."/>
            <person name="Ring B.Z."/>
            <person name="Ringwald M."/>
            <person name="Rost B."/>
            <person name="Ruan Y."/>
            <person name="Salzberg S.L."/>
            <person name="Sandelin A."/>
            <person name="Schneider C."/>
            <person name="Schoenbach C."/>
            <person name="Sekiguchi K."/>
            <person name="Semple C.A."/>
            <person name="Seno S."/>
            <person name="Sessa L."/>
            <person name="Sheng Y."/>
            <person name="Shibata Y."/>
            <person name="Shimada H."/>
            <person name="Shimada K."/>
            <person name="Silva D."/>
            <person name="Sinclair B."/>
            <person name="Sperling S."/>
            <person name="Stupka E."/>
            <person name="Sugiura K."/>
            <person name="Sultana R."/>
            <person name="Takenaka Y."/>
            <person name="Taki K."/>
            <person name="Tammoja K."/>
            <person name="Tan S.L."/>
            <person name="Tang S."/>
            <person name="Taylor M.S."/>
            <person name="Tegner J."/>
            <person name="Teichmann S.A."/>
            <person name="Ueda H.R."/>
            <person name="van Nimwegen E."/>
            <person name="Verardo R."/>
            <person name="Wei C.L."/>
            <person name="Yagi K."/>
            <person name="Yamanishi H."/>
            <person name="Zabarovsky E."/>
            <person name="Zhu S."/>
            <person name="Zimmer A."/>
            <person name="Hide W."/>
            <person name="Bult C."/>
            <person name="Grimmond S.M."/>
            <person name="Teasdale R.D."/>
            <person name="Liu E.T."/>
            <person name="Brusic V."/>
            <person name="Quackenbush J."/>
            <person name="Wahlestedt C."/>
            <person name="Mattick J.S."/>
            <person name="Hume D.A."/>
            <person name="Kai C."/>
            <person name="Sasaki D."/>
            <person name="Tomaru Y."/>
            <person name="Fukuda S."/>
            <person name="Kanamori-Katayama M."/>
            <person name="Suzuki M."/>
            <person name="Aoki J."/>
            <person name="Arakawa T."/>
            <person name="Iida J."/>
            <person name="Imamura K."/>
            <person name="Itoh M."/>
            <person name="Kato T."/>
            <person name="Kawaji H."/>
            <person name="Kawagashira N."/>
            <person name="Kawashima T."/>
            <person name="Kojima M."/>
            <person name="Kondo S."/>
            <person name="Konno H."/>
            <person name="Nakano K."/>
            <person name="Ninomiya N."/>
            <person name="Nishio T."/>
            <person name="Okada M."/>
            <person name="Plessy C."/>
            <person name="Shibata K."/>
            <person name="Shiraki T."/>
            <person name="Suzuki S."/>
            <person name="Tagami M."/>
            <person name="Waki K."/>
            <person name="Watahiki A."/>
            <person name="Okamura-Oho Y."/>
            <person name="Suzuki H."/>
            <person name="Kawai J."/>
            <person name="Hayashizaki Y."/>
        </authorList>
    </citation>
    <scope>NUCLEOTIDE SEQUENCE [LARGE SCALE MRNA]</scope>
    <source>
        <strain>C57BL/6J</strain>
        <tissue>Small intestine</tissue>
    </source>
</reference>
<reference key="3">
    <citation type="journal article" date="2004" name="Genome Res.">
        <title>The status, quality, and expansion of the NIH full-length cDNA project: the Mammalian Gene Collection (MGC).</title>
        <authorList>
            <consortium name="The MGC Project Team"/>
        </authorList>
    </citation>
    <scope>NUCLEOTIDE SEQUENCE [LARGE SCALE MRNA]</scope>
    <source>
        <strain>FVB/N</strain>
        <tissue>Liver</tissue>
    </source>
</reference>
<reference key="4">
    <citation type="journal article" date="2010" name="Cell">
        <title>A tissue-specific atlas of mouse protein phosphorylation and expression.</title>
        <authorList>
            <person name="Huttlin E.L."/>
            <person name="Jedrychowski M.P."/>
            <person name="Elias J.E."/>
            <person name="Goswami T."/>
            <person name="Rad R."/>
            <person name="Beausoleil S.A."/>
            <person name="Villen J."/>
            <person name="Haas W."/>
            <person name="Sowa M.E."/>
            <person name="Gygi S.P."/>
        </authorList>
    </citation>
    <scope>IDENTIFICATION BY MASS SPECTROMETRY [LARGE SCALE ANALYSIS]</scope>
    <source>
        <tissue>Liver</tissue>
    </source>
</reference>
<keyword id="KW-0256">Endoplasmic reticulum</keyword>
<keyword id="KW-0967">Endosome</keyword>
<keyword id="KW-0325">Glycoprotein</keyword>
<keyword id="KW-0443">Lipid metabolism</keyword>
<keyword id="KW-0472">Membrane</keyword>
<keyword id="KW-0492">Microsome</keyword>
<keyword id="KW-0520">NAD</keyword>
<keyword id="KW-0560">Oxidoreductase</keyword>
<keyword id="KW-1185">Reference proteome</keyword>
<keyword id="KW-0732">Signal</keyword>
<keyword id="KW-0753">Steroid metabolism</keyword>
<name>H17B6_MOUSE</name>
<organism>
    <name type="scientific">Mus musculus</name>
    <name type="common">Mouse</name>
    <dbReference type="NCBI Taxonomy" id="10090"/>
    <lineage>
        <taxon>Eukaryota</taxon>
        <taxon>Metazoa</taxon>
        <taxon>Chordata</taxon>
        <taxon>Craniata</taxon>
        <taxon>Vertebrata</taxon>
        <taxon>Euteleostomi</taxon>
        <taxon>Mammalia</taxon>
        <taxon>Eutheria</taxon>
        <taxon>Euarchontoglires</taxon>
        <taxon>Glires</taxon>
        <taxon>Rodentia</taxon>
        <taxon>Myomorpha</taxon>
        <taxon>Muroidea</taxon>
        <taxon>Muridae</taxon>
        <taxon>Murinae</taxon>
        <taxon>Mus</taxon>
        <taxon>Mus</taxon>
    </lineage>
</organism>
<gene>
    <name type="primary">Hsd17b6</name>
    <name type="synonym">Gm182</name>
    <name type="synonym">Hsd17b9</name>
    <name type="synonym">Rdh8</name>
</gene>
<feature type="signal peptide" evidence="3">
    <location>
        <begin position="1"/>
        <end position="17"/>
    </location>
</feature>
<feature type="chain" id="PRO_0000303212" description="17-beta-hydroxysteroid dehydrogenase type 6">
    <location>
        <begin position="18"/>
        <end position="317"/>
    </location>
</feature>
<feature type="active site" description="Proton acceptor" evidence="4">
    <location>
        <position position="176"/>
    </location>
</feature>
<feature type="binding site" evidence="1">
    <location>
        <begin position="33"/>
        <end position="57"/>
    </location>
    <ligand>
        <name>NAD(+)</name>
        <dbReference type="ChEBI" id="CHEBI:57540"/>
    </ligand>
</feature>
<feature type="binding site" evidence="3">
    <location>
        <position position="164"/>
    </location>
    <ligand>
        <name>substrate</name>
    </ligand>
</feature>
<feature type="glycosylation site" description="N-linked (GlcNAc...) asparagine" evidence="3">
    <location>
        <position position="71"/>
    </location>
</feature>
<feature type="glycosylation site" description="N-linked (GlcNAc...) asparagine" evidence="3">
    <location>
        <position position="161"/>
    </location>
</feature>
<sequence>MWFYLVTLVGLYHLLRWYRERQVVSHLQDKYVFITGCDSGFGNLLARQLDRRGMRVLAACLTEKGAEELRNKTSDRLETVILDVTKTESIVAATQWVKERVGDRGLWGLVNNAGVLQPFAYIEWYRPEDYMPIFQVNLIGLTQVTISMLFLVKKARGRIVNVSSALGRVALFGGFYSCSKYGVEAFSDVLRHEVQDFGVKVSIIEPGSFKTEMTDAELTIERTKKVWEAAPEHIKESYGQQFFDDFCSTTKRELMKCSRNLSLVTDCMEHALTSTHPRTRYSAGWDAKFFFIPLSYLPASLVDYLLAISRGKPAQAA</sequence>
<dbReference type="EC" id="1.1.1.105" evidence="5"/>
<dbReference type="EC" id="1.1.1.209" evidence="5"/>
<dbReference type="EC" id="1.1.1.239" evidence="5"/>
<dbReference type="EC" id="1.1.1.53" evidence="5"/>
<dbReference type="EC" id="1.1.1.62" evidence="5"/>
<dbReference type="EMBL" id="AF103797">
    <property type="protein sequence ID" value="AAF04761.1"/>
    <property type="molecule type" value="mRNA"/>
</dbReference>
<dbReference type="EMBL" id="AK008212">
    <property type="protein sequence ID" value="BAB25536.1"/>
    <property type="molecule type" value="mRNA"/>
</dbReference>
<dbReference type="EMBL" id="BC021836">
    <property type="protein sequence ID" value="AAH21836.1"/>
    <property type="molecule type" value="mRNA"/>
</dbReference>
<dbReference type="CCDS" id="CCDS24257.1"/>
<dbReference type="RefSeq" id="NP_001346306.1">
    <property type="nucleotide sequence ID" value="NM_001359377.1"/>
</dbReference>
<dbReference type="RefSeq" id="NP_001415849.1">
    <property type="nucleotide sequence ID" value="NM_001428920.1"/>
</dbReference>
<dbReference type="RefSeq" id="NP_001415850.1">
    <property type="nucleotide sequence ID" value="NM_001428921.1"/>
</dbReference>
<dbReference type="RefSeq" id="NP_001415851.1">
    <property type="nucleotide sequence ID" value="NM_001428922.1"/>
</dbReference>
<dbReference type="RefSeq" id="NP_001415852.1">
    <property type="nucleotide sequence ID" value="NM_001428923.1"/>
</dbReference>
<dbReference type="RefSeq" id="NP_038814.1">
    <property type="nucleotide sequence ID" value="NM_013786.4"/>
</dbReference>
<dbReference type="RefSeq" id="XP_011241765.1">
    <property type="nucleotide sequence ID" value="XM_011243463.2"/>
</dbReference>
<dbReference type="RefSeq" id="XP_011241766.1">
    <property type="nucleotide sequence ID" value="XM_011243464.2"/>
</dbReference>
<dbReference type="RefSeq" id="XP_011241767.1">
    <property type="nucleotide sequence ID" value="XM_011243465.2"/>
</dbReference>
<dbReference type="RefSeq" id="XP_011241769.1">
    <property type="nucleotide sequence ID" value="XM_011243467.2"/>
</dbReference>
<dbReference type="RefSeq" id="XP_030100965.1">
    <property type="nucleotide sequence ID" value="XM_030245105.1"/>
</dbReference>
<dbReference type="RefSeq" id="XP_030100967.1">
    <property type="nucleotide sequence ID" value="XM_030245107.1"/>
</dbReference>
<dbReference type="RefSeq" id="XP_030100968.1">
    <property type="nucleotide sequence ID" value="XM_030245108.1"/>
</dbReference>
<dbReference type="SMR" id="Q9R092"/>
<dbReference type="FunCoup" id="Q9R092">
    <property type="interactions" value="649"/>
</dbReference>
<dbReference type="STRING" id="10090.ENSMUSP00000151661"/>
<dbReference type="GlyCosmos" id="Q9R092">
    <property type="glycosylation" value="2 sites, No reported glycans"/>
</dbReference>
<dbReference type="GlyGen" id="Q9R092">
    <property type="glycosylation" value="3 sites, 1 O-linked glycan (1 site)"/>
</dbReference>
<dbReference type="iPTMnet" id="Q9R092"/>
<dbReference type="PhosphoSitePlus" id="Q9R092"/>
<dbReference type="SwissPalm" id="Q9R092"/>
<dbReference type="jPOST" id="Q9R092"/>
<dbReference type="PaxDb" id="10090-ENSMUSP00000026462"/>
<dbReference type="PeptideAtlas" id="Q9R092"/>
<dbReference type="ProteomicsDB" id="270873"/>
<dbReference type="Antibodypedia" id="16013">
    <property type="antibodies" value="127 antibodies from 29 providers"/>
</dbReference>
<dbReference type="DNASU" id="27400"/>
<dbReference type="Ensembl" id="ENSMUST00000026462.7">
    <property type="protein sequence ID" value="ENSMUSP00000026462.7"/>
    <property type="gene ID" value="ENSMUSG00000025396.8"/>
</dbReference>
<dbReference type="Ensembl" id="ENSMUST00000219183.2">
    <property type="protein sequence ID" value="ENSMUSP00000151661.2"/>
    <property type="gene ID" value="ENSMUSG00000025396.8"/>
</dbReference>
<dbReference type="Ensembl" id="ENSMUST00000219447.2">
    <property type="protein sequence ID" value="ENSMUSP00000151556.2"/>
    <property type="gene ID" value="ENSMUSG00000025396.8"/>
</dbReference>
<dbReference type="GeneID" id="27400"/>
<dbReference type="KEGG" id="mmu:27400"/>
<dbReference type="UCSC" id="uc007hky.1">
    <property type="organism name" value="mouse"/>
</dbReference>
<dbReference type="AGR" id="MGI:1351670"/>
<dbReference type="CTD" id="8630"/>
<dbReference type="MGI" id="MGI:1351670">
    <property type="gene designation" value="Hsd17b6"/>
</dbReference>
<dbReference type="VEuPathDB" id="HostDB:ENSMUSG00000025396"/>
<dbReference type="eggNOG" id="KOG1610">
    <property type="taxonomic scope" value="Eukaryota"/>
</dbReference>
<dbReference type="GeneTree" id="ENSGT00940000162028"/>
<dbReference type="HOGENOM" id="CLU_010194_2_0_1"/>
<dbReference type="InParanoid" id="Q9R092"/>
<dbReference type="OMA" id="FFDAYHD"/>
<dbReference type="OrthoDB" id="5296at2759"/>
<dbReference type="PhylomeDB" id="Q9R092"/>
<dbReference type="TreeFam" id="TF325617"/>
<dbReference type="Reactome" id="R-MMU-2453902">
    <property type="pathway name" value="The canonical retinoid cycle in rods (twilight vision)"/>
</dbReference>
<dbReference type="BioGRID-ORCS" id="27400">
    <property type="hits" value="0 hits in 79 CRISPR screens"/>
</dbReference>
<dbReference type="ChiTaRS" id="Hsd17b6">
    <property type="organism name" value="mouse"/>
</dbReference>
<dbReference type="PRO" id="PR:Q9R092"/>
<dbReference type="Proteomes" id="UP000000589">
    <property type="component" value="Chromosome 10"/>
</dbReference>
<dbReference type="RNAct" id="Q9R092">
    <property type="molecule type" value="protein"/>
</dbReference>
<dbReference type="Bgee" id="ENSMUSG00000025396">
    <property type="expression patterns" value="Expressed in left lobe of liver and 31 other cell types or tissues"/>
</dbReference>
<dbReference type="ExpressionAtlas" id="Q9R092">
    <property type="expression patterns" value="baseline and differential"/>
</dbReference>
<dbReference type="GO" id="GO:0031901">
    <property type="term" value="C:early endosome membrane"/>
    <property type="evidence" value="ECO:0007669"/>
    <property type="project" value="UniProtKB-SubCell"/>
</dbReference>
<dbReference type="GO" id="GO:0005783">
    <property type="term" value="C:endoplasmic reticulum"/>
    <property type="evidence" value="ECO:0007669"/>
    <property type="project" value="UniProtKB-KW"/>
</dbReference>
<dbReference type="GO" id="GO:0047024">
    <property type="term" value="F:5-alpha-androstane-3-beta,17-beta-diol dehydrogenase (NADP+) activity"/>
    <property type="evidence" value="ECO:0000314"/>
    <property type="project" value="UniProtKB"/>
</dbReference>
<dbReference type="GO" id="GO:0004745">
    <property type="term" value="F:all-trans-retinol dehydrogenase (NAD+) activity"/>
    <property type="evidence" value="ECO:0007669"/>
    <property type="project" value="UniProtKB-EC"/>
</dbReference>
<dbReference type="GO" id="GO:0047044">
    <property type="term" value="F:androstan-3-alpha,17-beta-diol dehydrogenase (NAD+) activity"/>
    <property type="evidence" value="ECO:0000314"/>
    <property type="project" value="UniProtKB"/>
</dbReference>
<dbReference type="GO" id="GO:0047023">
    <property type="term" value="F:androsterone dehydrogenase [NAD(P)+] activity"/>
    <property type="evidence" value="ECO:0000314"/>
    <property type="project" value="UniProtKB"/>
</dbReference>
<dbReference type="GO" id="GO:0004303">
    <property type="term" value="F:estradiol 17-beta-dehydrogenase [NAD(P)+] activity"/>
    <property type="evidence" value="ECO:0000314"/>
    <property type="project" value="UniProtKB"/>
</dbReference>
<dbReference type="GO" id="GO:0047045">
    <property type="term" value="F:testosterone 17-beta-dehydrogenase (NADP+) activity"/>
    <property type="evidence" value="ECO:0000314"/>
    <property type="project" value="UniProtKB"/>
</dbReference>
<dbReference type="GO" id="GO:0047035">
    <property type="term" value="F:testosterone dehydrogenase (NAD+) activity"/>
    <property type="evidence" value="ECO:0000314"/>
    <property type="project" value="UniProtKB"/>
</dbReference>
<dbReference type="GO" id="GO:0062175">
    <property type="term" value="P:brexanolone catabolic process"/>
    <property type="evidence" value="ECO:0000250"/>
    <property type="project" value="UniProtKB"/>
</dbReference>
<dbReference type="FunFam" id="3.40.50.720:FF:000074">
    <property type="entry name" value="Retinol dehydrogenase type 1"/>
    <property type="match status" value="1"/>
</dbReference>
<dbReference type="Gene3D" id="3.40.50.720">
    <property type="entry name" value="NAD(P)-binding Rossmann-like Domain"/>
    <property type="match status" value="1"/>
</dbReference>
<dbReference type="InterPro" id="IPR036291">
    <property type="entry name" value="NAD(P)-bd_dom_sf"/>
</dbReference>
<dbReference type="InterPro" id="IPR020904">
    <property type="entry name" value="Sc_DH/Rdtase_CS"/>
</dbReference>
<dbReference type="InterPro" id="IPR002347">
    <property type="entry name" value="SDR_fam"/>
</dbReference>
<dbReference type="PANTHER" id="PTHR43313:SF4">
    <property type="entry name" value="17-BETA-HYDROXYSTEROID DEHYDROGENASE TYPE 6"/>
    <property type="match status" value="1"/>
</dbReference>
<dbReference type="PANTHER" id="PTHR43313">
    <property type="entry name" value="SHORT-CHAIN DEHYDROGENASE/REDUCTASE FAMILY 9C"/>
    <property type="match status" value="1"/>
</dbReference>
<dbReference type="Pfam" id="PF00106">
    <property type="entry name" value="adh_short"/>
    <property type="match status" value="1"/>
</dbReference>
<dbReference type="PRINTS" id="PR00081">
    <property type="entry name" value="GDHRDH"/>
</dbReference>
<dbReference type="PRINTS" id="PR00080">
    <property type="entry name" value="SDRFAMILY"/>
</dbReference>
<dbReference type="SUPFAM" id="SSF51735">
    <property type="entry name" value="NAD(P)-binding Rossmann-fold domains"/>
    <property type="match status" value="1"/>
</dbReference>
<dbReference type="PROSITE" id="PS00061">
    <property type="entry name" value="ADH_SHORT"/>
    <property type="match status" value="1"/>
</dbReference>
<proteinExistence type="evidence at protein level"/>
<accession>Q9R092</accession>
<protein>
    <recommendedName>
        <fullName>17-beta-hydroxysteroid dehydrogenase type 6</fullName>
        <shortName>17-beta-HSD 6</shortName>
        <shortName>17-beta-HSD6</shortName>
        <ecNumber evidence="5">1.1.1.105</ecNumber>
        <ecNumber evidence="5">1.1.1.209</ecNumber>
        <ecNumber evidence="5">1.1.1.239</ecNumber>
        <ecNumber evidence="5">1.1.1.53</ecNumber>
        <ecNumber evidence="5">1.1.1.62</ecNumber>
    </recommendedName>
    <alternativeName>
        <fullName>17-beta-HSD9</fullName>
    </alternativeName>
    <alternativeName>
        <fullName>3-alpha-&gt;beta-hydroxysteroid epimerase</fullName>
        <shortName>3-alpha-&gt;beta-HSE</shortName>
    </alternativeName>
    <alternativeName>
        <fullName>Oxidative 3-alpha hydroxysteroid dehydrogenase</fullName>
    </alternativeName>
</protein>
<evidence type="ECO:0000250" key="1"/>
<evidence type="ECO:0000250" key="2">
    <source>
        <dbReference type="UniProtKB" id="O14756"/>
    </source>
</evidence>
<evidence type="ECO:0000255" key="3"/>
<evidence type="ECO:0000255" key="4">
    <source>
        <dbReference type="PROSITE-ProRule" id="PRU10001"/>
    </source>
</evidence>
<evidence type="ECO:0000269" key="5">
    <source>
    </source>
</evidence>
<evidence type="ECO:0000305" key="6"/>
<evidence type="ECO:0000305" key="7">
    <source>
    </source>
</evidence>
<comment type="function">
    <text evidence="5">NAD-dependent oxidoreductase with broad substrate specificity that shows both oxidative and reductive activity (in vitro). Has 17-beta-hydroxysteroid dehydrogenase activity towards various steroids (in vitro). Converts 5-alpha-androstan-3-alpha,17-beta-diol to androsterone and estradiol to estrone (in vitro). Has 3-alpha-hydroxysteroid dehydrogenase activity towards androsterone (in vitro). Has retinol dehydrogenase activity towards all-trans-retinol (in vitro).</text>
</comment>
<comment type="catalytic activity">
    <reaction evidence="5">
        <text>all-trans-retinol--[retinol-binding protein] + NAD(+) = all-trans-retinal--[retinol-binding protein] + NADH + H(+)</text>
        <dbReference type="Rhea" id="RHEA:48488"/>
        <dbReference type="Rhea" id="RHEA-COMP:14428"/>
        <dbReference type="Rhea" id="RHEA-COMP:14430"/>
        <dbReference type="ChEBI" id="CHEBI:15378"/>
        <dbReference type="ChEBI" id="CHEBI:17336"/>
        <dbReference type="ChEBI" id="CHEBI:17898"/>
        <dbReference type="ChEBI" id="CHEBI:57540"/>
        <dbReference type="ChEBI" id="CHEBI:57945"/>
        <dbReference type="ChEBI" id="CHEBI:83228"/>
        <dbReference type="EC" id="1.1.1.105"/>
    </reaction>
</comment>
<comment type="catalytic activity">
    <reaction evidence="5">
        <text>all-trans-retinol + NAD(+) = all-trans-retinal + NADH + H(+)</text>
        <dbReference type="Rhea" id="RHEA:21284"/>
        <dbReference type="ChEBI" id="CHEBI:15378"/>
        <dbReference type="ChEBI" id="CHEBI:17336"/>
        <dbReference type="ChEBI" id="CHEBI:17898"/>
        <dbReference type="ChEBI" id="CHEBI:57540"/>
        <dbReference type="ChEBI" id="CHEBI:57945"/>
        <dbReference type="EC" id="1.1.1.105"/>
    </reaction>
    <physiologicalReaction direction="left-to-right" evidence="7">
        <dbReference type="Rhea" id="RHEA:21285"/>
    </physiologicalReaction>
</comment>
<comment type="catalytic activity">
    <reaction evidence="5">
        <text>androsterone + NAD(+) = 5alpha-androstan-3,17-dione + NADH + H(+)</text>
        <dbReference type="Rhea" id="RHEA:20381"/>
        <dbReference type="ChEBI" id="CHEBI:15378"/>
        <dbReference type="ChEBI" id="CHEBI:15994"/>
        <dbReference type="ChEBI" id="CHEBI:16032"/>
        <dbReference type="ChEBI" id="CHEBI:57540"/>
        <dbReference type="ChEBI" id="CHEBI:57945"/>
        <dbReference type="EC" id="1.1.1.209"/>
    </reaction>
    <physiologicalReaction direction="left-to-right" evidence="5">
        <dbReference type="Rhea" id="RHEA:20382"/>
    </physiologicalReaction>
    <physiologicalReaction direction="right-to-left" evidence="5">
        <dbReference type="Rhea" id="RHEA:20383"/>
    </physiologicalReaction>
</comment>
<comment type="catalytic activity">
    <reaction evidence="5">
        <text>testosterone + NAD(+) = androst-4-ene-3,17-dione + NADH + H(+)</text>
        <dbReference type="Rhea" id="RHEA:14929"/>
        <dbReference type="ChEBI" id="CHEBI:15378"/>
        <dbReference type="ChEBI" id="CHEBI:16422"/>
        <dbReference type="ChEBI" id="CHEBI:17347"/>
        <dbReference type="ChEBI" id="CHEBI:57540"/>
        <dbReference type="ChEBI" id="CHEBI:57945"/>
        <dbReference type="EC" id="1.1.1.239"/>
    </reaction>
</comment>
<comment type="catalytic activity">
    <reaction evidence="5">
        <text>5alpha-androstane-3alpha,17beta-diol + NAD(+) = 17beta-hydroxy-5alpha-androstan-3-one + NADH + H(+)</text>
        <dbReference type="Rhea" id="RHEA:42004"/>
        <dbReference type="ChEBI" id="CHEBI:15378"/>
        <dbReference type="ChEBI" id="CHEBI:16330"/>
        <dbReference type="ChEBI" id="CHEBI:36713"/>
        <dbReference type="ChEBI" id="CHEBI:57540"/>
        <dbReference type="ChEBI" id="CHEBI:57945"/>
        <dbReference type="EC" id="1.1.1.53"/>
    </reaction>
    <physiologicalReaction direction="right-to-left" evidence="7">
        <dbReference type="Rhea" id="RHEA:42006"/>
    </physiologicalReaction>
</comment>
<comment type="catalytic activity">
    <reaction evidence="5">
        <text>17beta-estradiol + NAD(+) = estrone + NADH + H(+)</text>
        <dbReference type="Rhea" id="RHEA:24612"/>
        <dbReference type="ChEBI" id="CHEBI:15378"/>
        <dbReference type="ChEBI" id="CHEBI:16469"/>
        <dbReference type="ChEBI" id="CHEBI:17263"/>
        <dbReference type="ChEBI" id="CHEBI:57540"/>
        <dbReference type="ChEBI" id="CHEBI:57945"/>
        <dbReference type="EC" id="1.1.1.62"/>
    </reaction>
</comment>
<comment type="catalytic activity">
    <reaction evidence="5">
        <text>17beta-estradiol + NADP(+) = estrone + NADPH + H(+)</text>
        <dbReference type="Rhea" id="RHEA:24616"/>
        <dbReference type="ChEBI" id="CHEBI:15378"/>
        <dbReference type="ChEBI" id="CHEBI:16469"/>
        <dbReference type="ChEBI" id="CHEBI:17263"/>
        <dbReference type="ChEBI" id="CHEBI:57783"/>
        <dbReference type="ChEBI" id="CHEBI:58349"/>
        <dbReference type="EC" id="1.1.1.62"/>
    </reaction>
</comment>
<comment type="catalytic activity">
    <reaction evidence="2">
        <text>3alpha-hydroxy-5alpha-pregnan-20-one + NAD(+) = 5alpha-pregnane-3,20-dione + NADH + H(+)</text>
        <dbReference type="Rhea" id="RHEA:41980"/>
        <dbReference type="ChEBI" id="CHEBI:15378"/>
        <dbReference type="ChEBI" id="CHEBI:28952"/>
        <dbReference type="ChEBI" id="CHEBI:50169"/>
        <dbReference type="ChEBI" id="CHEBI:57540"/>
        <dbReference type="ChEBI" id="CHEBI:57945"/>
    </reaction>
    <physiologicalReaction direction="left-to-right" evidence="2">
        <dbReference type="Rhea" id="RHEA:41981"/>
    </physiologicalReaction>
</comment>
<comment type="catalytic activity">
    <reaction evidence="2">
        <text>5alpha-androstane-3beta,17beta-diol + NAD(+) = 17beta-hydroxy-5alpha-androstan-3-one + NADH + H(+)</text>
        <dbReference type="Rhea" id="RHEA:42184"/>
        <dbReference type="ChEBI" id="CHEBI:15378"/>
        <dbReference type="ChEBI" id="CHEBI:16330"/>
        <dbReference type="ChEBI" id="CHEBI:18329"/>
        <dbReference type="ChEBI" id="CHEBI:57540"/>
        <dbReference type="ChEBI" id="CHEBI:57945"/>
    </reaction>
    <physiologicalReaction direction="right-to-left" evidence="2">
        <dbReference type="Rhea" id="RHEA:42186"/>
    </physiologicalReaction>
</comment>
<comment type="catalytic activity">
    <reaction evidence="2">
        <text>3beta-hydroxy-5alpha-androstan-17-one + NAD(+) = 5alpha-androstan-3,17-dione + NADH + H(+)</text>
        <dbReference type="Rhea" id="RHEA:42188"/>
        <dbReference type="ChEBI" id="CHEBI:15378"/>
        <dbReference type="ChEBI" id="CHEBI:15994"/>
        <dbReference type="ChEBI" id="CHEBI:57540"/>
        <dbReference type="ChEBI" id="CHEBI:57945"/>
        <dbReference type="ChEBI" id="CHEBI:541975"/>
    </reaction>
    <physiologicalReaction direction="right-to-left" evidence="2">
        <dbReference type="Rhea" id="RHEA:42190"/>
    </physiologicalReaction>
</comment>
<comment type="activity regulation">
    <text evidence="5">Inhibited by carbenoxolone and phenyl arsenoxide.</text>
</comment>
<comment type="biophysicochemical properties">
    <kinetics>
        <KM evidence="5">1.4 uM for 5-alpha-androstan-3-alpha,17-beta-diol</KM>
        <KM evidence="5">1.3 uM for androsterone</KM>
        <KM evidence="5">3.2 uM for all-trans-retinol</KM>
        <KM evidence="5">1.5 uM for estradiol</KM>
        <Vmax evidence="5">2.8 nmol/min/mg enzyme for 5-alpha-androstan-3-alpha,17-beta-diol</Vmax>
        <Vmax evidence="5">1.1 nmol/min/mg enzyme for androsterone</Vmax>
        <Vmax evidence="5">0.4 nmol/min/mg enzyme for all-trans-retinol</Vmax>
        <Vmax evidence="5">2.3 nmol/min/mg enzyme for estradiol</Vmax>
    </kinetics>
    <phDependence>
        <text evidence="5">Optimum pH is 8.5-9.5.</text>
    </phDependence>
</comment>
<comment type="subcellular location">
    <subcellularLocation>
        <location evidence="5">Microsome membrane</location>
        <topology evidence="5">Peripheral membrane protein</topology>
        <orientation evidence="5">Lumenal side</orientation>
    </subcellularLocation>
    <subcellularLocation>
        <location evidence="6">Early endosome membrane</location>
        <topology evidence="6">Peripheral membrane protein</topology>
        <orientation evidence="6">Lumenal side</orientation>
    </subcellularLocation>
</comment>
<comment type="tissue specificity">
    <text evidence="5">Detected in liver.</text>
</comment>
<comment type="similarity">
    <text evidence="6">Belongs to the short-chain dehydrogenases/reductases (SDR) family.</text>
</comment>